<evidence type="ECO:0000255" key="1"/>
<evidence type="ECO:0000256" key="2">
    <source>
        <dbReference type="SAM" id="MobiDB-lite"/>
    </source>
</evidence>
<evidence type="ECO:0000269" key="3">
    <source>
    </source>
</evidence>
<evidence type="ECO:0000269" key="4">
    <source>
    </source>
</evidence>
<evidence type="ECO:0000269" key="5">
    <source>
    </source>
</evidence>
<evidence type="ECO:0000269" key="6">
    <source>
    </source>
</evidence>
<evidence type="ECO:0000269" key="7">
    <source>
    </source>
</evidence>
<evidence type="ECO:0000269" key="8">
    <source>
    </source>
</evidence>
<evidence type="ECO:0000269" key="9">
    <source>
    </source>
</evidence>
<evidence type="ECO:0000269" key="10">
    <source>
    </source>
</evidence>
<evidence type="ECO:0000269" key="11">
    <source>
    </source>
</evidence>
<evidence type="ECO:0000269" key="12">
    <source>
    </source>
</evidence>
<evidence type="ECO:0000269" key="13">
    <source>
    </source>
</evidence>
<evidence type="ECO:0000269" key="14">
    <source>
    </source>
</evidence>
<evidence type="ECO:0000269" key="15">
    <source>
    </source>
</evidence>
<evidence type="ECO:0000269" key="16">
    <source>
    </source>
</evidence>
<evidence type="ECO:0000269" key="17">
    <source>
    </source>
</evidence>
<evidence type="ECO:0000305" key="18"/>
<evidence type="ECO:0007744" key="19">
    <source>
    </source>
</evidence>
<evidence type="ECO:0007744" key="20">
    <source>
    </source>
</evidence>
<evidence type="ECO:0007829" key="21">
    <source>
        <dbReference type="PDB" id="2PQN"/>
    </source>
</evidence>
<evidence type="ECO:0007829" key="22">
    <source>
        <dbReference type="PDB" id="2XU6"/>
    </source>
</evidence>
<keyword id="KW-0002">3D-structure</keyword>
<keyword id="KW-0175">Coiled coil</keyword>
<keyword id="KW-0472">Membrane</keyword>
<keyword id="KW-0496">Mitochondrion</keyword>
<keyword id="KW-1000">Mitochondrion outer membrane</keyword>
<keyword id="KW-0597">Phosphoprotein</keyword>
<keyword id="KW-1185">Reference proteome</keyword>
<keyword id="KW-0677">Repeat</keyword>
<keyword id="KW-0853">WD repeat</keyword>
<proteinExistence type="evidence at protein level"/>
<organism>
    <name type="scientific">Saccharomyces cerevisiae (strain ATCC 204508 / S288c)</name>
    <name type="common">Baker's yeast</name>
    <dbReference type="NCBI Taxonomy" id="559292"/>
    <lineage>
        <taxon>Eukaryota</taxon>
        <taxon>Fungi</taxon>
        <taxon>Dikarya</taxon>
        <taxon>Ascomycota</taxon>
        <taxon>Saccharomycotina</taxon>
        <taxon>Saccharomycetes</taxon>
        <taxon>Saccharomycetales</taxon>
        <taxon>Saccharomycetaceae</taxon>
        <taxon>Saccharomyces</taxon>
    </lineage>
</organism>
<comment type="function">
    <text evidence="3 4 5 6 12 13 15 17">Involved in mitochondrial fission. Has a partially redundant function to CAF4 in acting as an adapter protein, binding to FIS1 on the mitochondrial outer membrane and recruiting the dynamin-like GTPase DNM1 to form mitochondrial fission complexes. Formation of these complexes is required to promote constriction and fission of the mitochondrial compartment at a late step in mitochondrial division.</text>
</comment>
<comment type="subunit">
    <text evidence="4 6 7 10 11 12 13 15">Interacts with CAF4, DNM1 and FIS1, components of the mitochondrial fission machinery. Interacts via its N-terminal, coiled-coil extension (NTE) with FIS1, and via its WD repeats with DNM1.</text>
</comment>
<comment type="interaction">
    <interactant intactId="EBI-26032">
        <id>P47025</id>
    </interactant>
    <interactant intactId="EBI-25059">
        <id>P40515</id>
        <label>FIS1</label>
    </interactant>
    <organismsDiffer>false</organismsDiffer>
    <experiments>5</experiments>
</comment>
<comment type="subcellular location">
    <subcellularLocation>
        <location evidence="3 4 5 8 11 14 16">Mitochondrion outer membrane</location>
        <topology evidence="3 4 5 8 11 14 16">Peripheral membrane protein</topology>
        <orientation evidence="3 4 5 8 11 14 16">Cytoplasmic side</orientation>
    </subcellularLocation>
    <text>Uniformly distributed on the cytoplasmic face of the mitochondrial outer membrane. This localization is dependent on FIS1. Reorganizes to punctate structures on mitochondria, corresponding to mitochondrial constriction sites, at a late step in mitochondrial division. This relocalization is dependent on DNM1.</text>
</comment>
<comment type="miscellaneous">
    <text evidence="9">Present with 3730 molecules/cell in log phase SD medium.</text>
</comment>
<comment type="similarity">
    <text evidence="18">Belongs to the WD repeat MDV1/CAF4 family.</text>
</comment>
<reference key="1">
    <citation type="journal article" date="1996" name="Yeast">
        <title>Sequencing analysis of a 40.2 kb fragment of yeast chromosome X reveals 19 open reading frames including URA2 (5' end), TRK1, PBS2, SPT10, GCD14, RPE1, PHO86, NCA3, ASF1, CCT7, GZF3, two tRNA genes, three remnant delta elements and a Ty4 transposon.</title>
        <authorList>
            <person name="Cziepluch C."/>
            <person name="Kordes E."/>
            <person name="Pujol A."/>
            <person name="Jauniaux J.-C."/>
        </authorList>
    </citation>
    <scope>NUCLEOTIDE SEQUENCE [GENOMIC DNA]</scope>
    <source>
        <strain>ATCC 96604 / S288c / FY1679</strain>
    </source>
</reference>
<reference key="2">
    <citation type="journal article" date="1996" name="EMBO J.">
        <title>Complete nucleotide sequence of Saccharomyces cerevisiae chromosome X.</title>
        <authorList>
            <person name="Galibert F."/>
            <person name="Alexandraki D."/>
            <person name="Baur A."/>
            <person name="Boles E."/>
            <person name="Chalwatzis N."/>
            <person name="Chuat J.-C."/>
            <person name="Coster F."/>
            <person name="Cziepluch C."/>
            <person name="de Haan M."/>
            <person name="Domdey H."/>
            <person name="Durand P."/>
            <person name="Entian K.-D."/>
            <person name="Gatius M."/>
            <person name="Goffeau A."/>
            <person name="Grivell L.A."/>
            <person name="Hennemann A."/>
            <person name="Herbert C.J."/>
            <person name="Heumann K."/>
            <person name="Hilger F."/>
            <person name="Hollenberg C.P."/>
            <person name="Huang M.-E."/>
            <person name="Jacq C."/>
            <person name="Jauniaux J.-C."/>
            <person name="Katsoulou C."/>
            <person name="Kirchrath L."/>
            <person name="Kleine K."/>
            <person name="Kordes E."/>
            <person name="Koetter P."/>
            <person name="Liebl S."/>
            <person name="Louis E.J."/>
            <person name="Manus V."/>
            <person name="Mewes H.-W."/>
            <person name="Miosga T."/>
            <person name="Obermaier B."/>
            <person name="Perea J."/>
            <person name="Pohl T.M."/>
            <person name="Portetelle D."/>
            <person name="Pujol A."/>
            <person name="Purnelle B."/>
            <person name="Ramezani Rad M."/>
            <person name="Rasmussen S.W."/>
            <person name="Rose M."/>
            <person name="Rossau R."/>
            <person name="Schaaff-Gerstenschlaeger I."/>
            <person name="Smits P.H.M."/>
            <person name="Scarcez T."/>
            <person name="Soriano N."/>
            <person name="To Van D."/>
            <person name="Tzermia M."/>
            <person name="Van Broekhoven A."/>
            <person name="Vandenbol M."/>
            <person name="Wedler H."/>
            <person name="von Wettstein D."/>
            <person name="Wambutt R."/>
            <person name="Zagulski M."/>
            <person name="Zollner A."/>
            <person name="Karpfinger-Hartl L."/>
        </authorList>
    </citation>
    <scope>NUCLEOTIDE SEQUENCE [LARGE SCALE GENOMIC DNA]</scope>
    <source>
        <strain>ATCC 204508 / S288c</strain>
    </source>
</reference>
<reference key="3">
    <citation type="journal article" date="2014" name="G3 (Bethesda)">
        <title>The reference genome sequence of Saccharomyces cerevisiae: Then and now.</title>
        <authorList>
            <person name="Engel S.R."/>
            <person name="Dietrich F.S."/>
            <person name="Fisk D.G."/>
            <person name="Binkley G."/>
            <person name="Balakrishnan R."/>
            <person name="Costanzo M.C."/>
            <person name="Dwight S.S."/>
            <person name="Hitz B.C."/>
            <person name="Karra K."/>
            <person name="Nash R.S."/>
            <person name="Weng S."/>
            <person name="Wong E.D."/>
            <person name="Lloyd P."/>
            <person name="Skrzypek M.S."/>
            <person name="Miyasato S.R."/>
            <person name="Simison M."/>
            <person name="Cherry J.M."/>
        </authorList>
    </citation>
    <scope>GENOME REANNOTATION</scope>
    <source>
        <strain>ATCC 204508 / S288c</strain>
    </source>
</reference>
<reference key="4">
    <citation type="journal article" date="1995" name="Yeast">
        <title>A 37.5 kb region of yeast chromosome X includes the SME1, MEF2, GSH1 and CSD3 genes, a TCP-1-related gene, an open reading frame similar to the DAL80 gene, and a tRNA(Arg).</title>
        <authorList>
            <person name="Rasmussen S.W."/>
        </authorList>
    </citation>
    <scope>NUCLEOTIDE SEQUENCE [GENOMIC DNA] OF 596-714</scope>
    <source>
        <strain>ATCC 96604 / S288c / FY1679</strain>
    </source>
</reference>
<reference key="5">
    <citation type="journal article" date="2000" name="J. Cell Biol.">
        <title>Mdv1p is a WD repeat protein that interacts with the dynamin-related GTPase, Dnm1p, to trigger mitochondrial division.</title>
        <authorList>
            <person name="Tieu Q."/>
            <person name="Nunnari J."/>
        </authorList>
    </citation>
    <scope>FUNCTION</scope>
    <scope>INTERACTION WITH DNM1</scope>
    <scope>SUBCELLULAR LOCATION</scope>
</reference>
<reference key="6">
    <citation type="journal article" date="2000" name="J. Cell Biol.">
        <title>Gag3p, an outer membrane protein required for fission of mitochondrial tubules.</title>
        <authorList>
            <person name="Fekkes P."/>
            <person name="Shepard K.A."/>
            <person name="Yaffe M.P."/>
        </authorList>
    </citation>
    <scope>FUNCTION</scope>
    <scope>SUBCELLULAR LOCATION</scope>
</reference>
<reference key="7">
    <citation type="journal article" date="2000" name="J. Cell Biol.">
        <title>Dnm1p GTPase-mediated mitochondrial fission is a multi-step process requiring the novel integral membrane component Fis1p.</title>
        <authorList>
            <person name="Mozdy A.D."/>
            <person name="McCaffery J.M."/>
            <person name="Shaw J.M."/>
        </authorList>
    </citation>
    <scope>FUNCTION</scope>
    <scope>SUBCELLULAR LOCATION</scope>
</reference>
<reference key="8">
    <citation type="journal article" date="2002" name="J. Cell Biol.">
        <title>The WD repeat protein, Mdv1p, functions as a molecular adaptor by interacting with Dnm1p and Fis1p during mitochondrial fission.</title>
        <authorList>
            <person name="Tieu Q."/>
            <person name="Okreglak V."/>
            <person name="Naylor K."/>
            <person name="Nunnari J."/>
        </authorList>
    </citation>
    <scope>FUNCTION</scope>
    <scope>INTERACTION WITH FIS1</scope>
</reference>
<reference key="9">
    <citation type="journal article" date="2003" name="Mol. Biol. Cell">
        <title>The WD-repeats of Net2p interact with Dnm1p and Fis1p to regulate division of mitochondria.</title>
        <authorList>
            <person name="Cerveny K.L."/>
            <person name="Jensen R.E."/>
        </authorList>
    </citation>
    <scope>INTERACTION WITH DNM1 AND FIS1</scope>
    <scope>MUTAGENESIS OF PHE-400; ARG-461; ASP-664 AND SER-689</scope>
</reference>
<reference key="10">
    <citation type="journal article" date="2003" name="Nature">
        <title>Global analysis of protein localization in budding yeast.</title>
        <authorList>
            <person name="Huh W.-K."/>
            <person name="Falvo J.V."/>
            <person name="Gerke L.C."/>
            <person name="Carroll A.S."/>
            <person name="Howson R.W."/>
            <person name="Weissman J.S."/>
            <person name="O'Shea E.K."/>
        </authorList>
    </citation>
    <scope>SUBCELLULAR LOCATION [LARGE SCALE ANALYSIS]</scope>
</reference>
<reference key="11">
    <citation type="journal article" date="2003" name="Nature">
        <title>Global analysis of protein expression in yeast.</title>
        <authorList>
            <person name="Ghaemmaghami S."/>
            <person name="Huh W.-K."/>
            <person name="Bower K."/>
            <person name="Howson R.W."/>
            <person name="Belle A."/>
            <person name="Dephoure N."/>
            <person name="O'Shea E.K."/>
            <person name="Weissman J.S."/>
        </authorList>
    </citation>
    <scope>LEVEL OF PROTEIN EXPRESSION [LARGE SCALE ANALYSIS]</scope>
</reference>
<reference key="12">
    <citation type="journal article" date="2005" name="J. Biol. Chem.">
        <title>Novel structure of the N terminus in yeast Fis1 correlates with a specialized function in mitochondrial fission.</title>
        <authorList>
            <person name="Suzuki M."/>
            <person name="Neutzner A."/>
            <person name="Tjandra N."/>
            <person name="Youle R.J."/>
        </authorList>
    </citation>
    <scope>INTERACTION WITH FIS1</scope>
</reference>
<reference key="13">
    <citation type="journal article" date="2005" name="J. Cell Biol.">
        <title>The WD40 protein Caf4p is a component of the mitochondrial fission machinery and recruits Dnm1p to mitochondria.</title>
        <authorList>
            <person name="Griffin E.E."/>
            <person name="Graumann J."/>
            <person name="Chan D.C."/>
        </authorList>
    </citation>
    <scope>INTERACTION WITH CAF4</scope>
    <scope>SUBCELLULAR LOCATION</scope>
</reference>
<reference key="14">
    <citation type="journal article" date="2005" name="J. Cell Biol.">
        <title>The role of Fis1p-Mdv1p interactions in mitochondrial fission complex assembly.</title>
        <authorList>
            <person name="Karren M.A."/>
            <person name="Coonrod E.M."/>
            <person name="Anderson T.K."/>
            <person name="Shaw J.M."/>
        </authorList>
    </citation>
    <scope>FUNCTION</scope>
    <scope>INTERACTION WITH FIS1</scope>
    <scope>MUTAGENESIS OF GLU-250</scope>
</reference>
<reference key="15">
    <citation type="journal article" date="2006" name="J. Biol. Chem.">
        <title>Mdv1 interacts with assembled Dnm1 to promote mitochondrial division.</title>
        <authorList>
            <person name="Naylor K."/>
            <person name="Ingerman E."/>
            <person name="Okreglak V."/>
            <person name="Marino M."/>
            <person name="Hinshaw J.E."/>
            <person name="Nunnari J."/>
        </authorList>
    </citation>
    <scope>FUNCTION</scope>
    <scope>INTERACTION WITH DNM1 AND FIS1</scope>
    <scope>MUTAGENESIS OF LEU-148; HIS-440; ASN-544 AND HIS-605</scope>
</reference>
<reference key="16">
    <citation type="journal article" date="2006" name="J. Biol. Chem.">
        <title>Dimeric Dnm1-G385D interacts with Mdv1 on mitochondria and can be stimulated to assemble into fission complexes containing Mdv1 and Fis1.</title>
        <authorList>
            <person name="Bhar D."/>
            <person name="Karren M.A."/>
            <person name="Babst M."/>
            <person name="Shaw J.M."/>
        </authorList>
    </citation>
    <scope>FUNCTION</scope>
    <scope>INTERACTION WITH DNM1</scope>
</reference>
<reference key="17">
    <citation type="journal article" date="2006" name="J. Proteome Res.">
        <title>Toward the complete yeast mitochondrial proteome: multidimensional separation techniques for mitochondrial proteomics.</title>
        <authorList>
            <person name="Reinders J."/>
            <person name="Zahedi R.P."/>
            <person name="Pfanner N."/>
            <person name="Meisinger C."/>
            <person name="Sickmann A."/>
        </authorList>
    </citation>
    <scope>SUBCELLULAR LOCATION [LARGE SCALE ANALYSIS]</scope>
    <scope>IDENTIFICATION BY MASS SPECTROMETRY</scope>
</reference>
<reference key="18">
    <citation type="journal article" date="2006" name="Mol. Biol. Cell">
        <title>Proteomic analysis of the yeast mitochondrial outer membrane reveals accumulation of a subclass of preproteins.</title>
        <authorList>
            <person name="Zahedi R.P."/>
            <person name="Sickmann A."/>
            <person name="Boehm A.M."/>
            <person name="Winkler C."/>
            <person name="Zufall N."/>
            <person name="Schoenfisch B."/>
            <person name="Guiard B."/>
            <person name="Pfanner N."/>
            <person name="Meisinger C."/>
        </authorList>
    </citation>
    <scope>SUBCELLULAR LOCATION</scope>
    <scope>IDENTIFICATION BY MASS SPECTROMETRY</scope>
</reference>
<reference key="19">
    <citation type="journal article" date="2008" name="Mol. Cell. Proteomics">
        <title>A multidimensional chromatography technology for in-depth phosphoproteome analysis.</title>
        <authorList>
            <person name="Albuquerque C.P."/>
            <person name="Smolka M.B."/>
            <person name="Payne S.H."/>
            <person name="Bafna V."/>
            <person name="Eng J."/>
            <person name="Zhou H."/>
        </authorList>
    </citation>
    <scope>PHOSPHORYLATION [LARGE SCALE ANALYSIS] AT SER-376</scope>
    <scope>IDENTIFICATION BY MASS SPECTROMETRY [LARGE SCALE ANALYSIS]</scope>
</reference>
<reference key="20">
    <citation type="journal article" date="2009" name="Science">
        <title>Global analysis of Cdk1 substrate phosphorylation sites provides insights into evolution.</title>
        <authorList>
            <person name="Holt L.J."/>
            <person name="Tuch B.B."/>
            <person name="Villen J."/>
            <person name="Johnson A.D."/>
            <person name="Gygi S.P."/>
            <person name="Morgan D.O."/>
        </authorList>
    </citation>
    <scope>PHOSPHORYLATION [LARGE SCALE ANALYSIS] AT SER-376</scope>
    <scope>IDENTIFICATION BY MASS SPECTROMETRY [LARGE SCALE ANALYSIS]</scope>
</reference>
<reference key="21">
    <citation type="journal article" date="2013" name="Proc. Natl. Acad. Sci. U.S.A.">
        <title>Interchangeable adaptors regulate mitochondrial dynamin assembly for membrane scission.</title>
        <authorList>
            <person name="Koirala S."/>
            <person name="Guo Q."/>
            <person name="Kalia R."/>
            <person name="Bui H.T."/>
            <person name="Eckert D.M."/>
            <person name="Frost A."/>
            <person name="Shaw J.M."/>
        </authorList>
    </citation>
    <scope>FUNCTION</scope>
</reference>
<name>MDV1_YEAST</name>
<dbReference type="EMBL" id="Z49387">
    <property type="protein sequence ID" value="CAA89407.1"/>
    <property type="molecule type" value="Genomic_DNA"/>
</dbReference>
<dbReference type="EMBL" id="BK006943">
    <property type="protein sequence ID" value="DAA08688.1"/>
    <property type="molecule type" value="Genomic_DNA"/>
</dbReference>
<dbReference type="PIR" id="S56893">
    <property type="entry name" value="S56893"/>
</dbReference>
<dbReference type="RefSeq" id="NP_012423.1">
    <property type="nucleotide sequence ID" value="NM_001181545.2"/>
</dbReference>
<dbReference type="PDB" id="2PQN">
    <property type="method" value="X-ray"/>
    <property type="resolution" value="2.15 A"/>
    <property type="chains" value="B=122-171"/>
</dbReference>
<dbReference type="PDB" id="2XU6">
    <property type="method" value="X-ray"/>
    <property type="resolution" value="2.70 A"/>
    <property type="chains" value="A/B=231-300"/>
</dbReference>
<dbReference type="PDB" id="3UUX">
    <property type="method" value="X-ray"/>
    <property type="resolution" value="3.90 A"/>
    <property type="chains" value="B/D=94-314"/>
</dbReference>
<dbReference type="PDB" id="5JST">
    <property type="method" value="X-ray"/>
    <property type="resolution" value="2.20 A"/>
    <property type="chains" value="A/B=230-300"/>
</dbReference>
<dbReference type="PDBsum" id="2PQN"/>
<dbReference type="PDBsum" id="2XU6"/>
<dbReference type="PDBsum" id="3UUX"/>
<dbReference type="PDBsum" id="5JST"/>
<dbReference type="SMR" id="P47025"/>
<dbReference type="BioGRID" id="33644">
    <property type="interactions" value="133"/>
</dbReference>
<dbReference type="DIP" id="DIP-1907N"/>
<dbReference type="FunCoup" id="P47025">
    <property type="interactions" value="76"/>
</dbReference>
<dbReference type="IntAct" id="P47025">
    <property type="interactions" value="21"/>
</dbReference>
<dbReference type="MINT" id="P47025"/>
<dbReference type="STRING" id="4932.YJL112W"/>
<dbReference type="iPTMnet" id="P47025"/>
<dbReference type="PaxDb" id="4932-YJL112W"/>
<dbReference type="PeptideAtlas" id="P47025"/>
<dbReference type="EnsemblFungi" id="YJL112W_mRNA">
    <property type="protein sequence ID" value="YJL112W"/>
    <property type="gene ID" value="YJL112W"/>
</dbReference>
<dbReference type="GeneID" id="853332"/>
<dbReference type="KEGG" id="sce:YJL112W"/>
<dbReference type="AGR" id="SGD:S000003648"/>
<dbReference type="SGD" id="S000003648">
    <property type="gene designation" value="MDV1"/>
</dbReference>
<dbReference type="VEuPathDB" id="FungiDB:YJL112W"/>
<dbReference type="eggNOG" id="KOG4155">
    <property type="taxonomic scope" value="Eukaryota"/>
</dbReference>
<dbReference type="GeneTree" id="ENSGT00940000176613"/>
<dbReference type="HOGENOM" id="CLU_012350_1_0_1"/>
<dbReference type="InParanoid" id="P47025"/>
<dbReference type="OMA" id="ERLRYMD"/>
<dbReference type="OrthoDB" id="496at2759"/>
<dbReference type="BioCyc" id="YEAST:G3O-31566-MONOMER"/>
<dbReference type="BioGRID-ORCS" id="853332">
    <property type="hits" value="1 hit in 10 CRISPR screens"/>
</dbReference>
<dbReference type="EvolutionaryTrace" id="P47025"/>
<dbReference type="PRO" id="PR:P47025"/>
<dbReference type="Proteomes" id="UP000002311">
    <property type="component" value="Chromosome X"/>
</dbReference>
<dbReference type="RNAct" id="P47025">
    <property type="molecule type" value="protein"/>
</dbReference>
<dbReference type="GO" id="GO:0005741">
    <property type="term" value="C:mitochondrial outer membrane"/>
    <property type="evidence" value="ECO:0000314"/>
    <property type="project" value="SGD"/>
</dbReference>
<dbReference type="GO" id="GO:0005739">
    <property type="term" value="C:mitochondrion"/>
    <property type="evidence" value="ECO:0007005"/>
    <property type="project" value="SGD"/>
</dbReference>
<dbReference type="GO" id="GO:0043130">
    <property type="term" value="F:ubiquitin binding"/>
    <property type="evidence" value="ECO:0000314"/>
    <property type="project" value="SGD"/>
</dbReference>
<dbReference type="GO" id="GO:0000266">
    <property type="term" value="P:mitochondrial fission"/>
    <property type="evidence" value="ECO:0000315"/>
    <property type="project" value="SGD"/>
</dbReference>
<dbReference type="GO" id="GO:0000002">
    <property type="term" value="P:mitochondrial genome maintenance"/>
    <property type="evidence" value="ECO:0000315"/>
    <property type="project" value="SGD"/>
</dbReference>
<dbReference type="GO" id="GO:0016559">
    <property type="term" value="P:peroxisome fission"/>
    <property type="evidence" value="ECO:0000316"/>
    <property type="project" value="SGD"/>
</dbReference>
<dbReference type="GO" id="GO:0090141">
    <property type="term" value="P:positive regulation of mitochondrial fission"/>
    <property type="evidence" value="ECO:0000314"/>
    <property type="project" value="UniProtKB"/>
</dbReference>
<dbReference type="CDD" id="cd22881">
    <property type="entry name" value="Mdv1_N"/>
    <property type="match status" value="1"/>
</dbReference>
<dbReference type="CDD" id="cd00200">
    <property type="entry name" value="WD40"/>
    <property type="match status" value="1"/>
</dbReference>
<dbReference type="FunFam" id="2.130.10.10:FF:001052">
    <property type="entry name" value="Mitochondrial division protein 1"/>
    <property type="match status" value="1"/>
</dbReference>
<dbReference type="FunFam" id="2.130.10.10:FF:001053">
    <property type="entry name" value="Mitochondrial division protein 1"/>
    <property type="match status" value="1"/>
</dbReference>
<dbReference type="Gene3D" id="6.10.280.220">
    <property type="match status" value="1"/>
</dbReference>
<dbReference type="Gene3D" id="2.130.10.10">
    <property type="entry name" value="YVTN repeat-like/Quinoprotein amine dehydrogenase"/>
    <property type="match status" value="2"/>
</dbReference>
<dbReference type="InterPro" id="IPR020472">
    <property type="entry name" value="G-protein_beta_WD-40_rep"/>
</dbReference>
<dbReference type="InterPro" id="IPR021061">
    <property type="entry name" value="Mt_division_protein_1"/>
</dbReference>
<dbReference type="InterPro" id="IPR015943">
    <property type="entry name" value="WD40/YVTN_repeat-like_dom_sf"/>
</dbReference>
<dbReference type="InterPro" id="IPR019775">
    <property type="entry name" value="WD40_repeat_CS"/>
</dbReference>
<dbReference type="InterPro" id="IPR036322">
    <property type="entry name" value="WD40_repeat_dom_sf"/>
</dbReference>
<dbReference type="InterPro" id="IPR001680">
    <property type="entry name" value="WD40_rpt"/>
</dbReference>
<dbReference type="InterPro" id="IPR051179">
    <property type="entry name" value="WD_repeat_multifunction"/>
</dbReference>
<dbReference type="PANTHER" id="PTHR19857:SF8">
    <property type="entry name" value="ANGIO-ASSOCIATED MIGRATORY CELL PROTEIN"/>
    <property type="match status" value="1"/>
</dbReference>
<dbReference type="PANTHER" id="PTHR19857">
    <property type="entry name" value="MITOCHONDRIAL DIVISION PROTEIN 1-RELATED"/>
    <property type="match status" value="1"/>
</dbReference>
<dbReference type="Pfam" id="PF11542">
    <property type="entry name" value="Mdv1"/>
    <property type="match status" value="1"/>
</dbReference>
<dbReference type="Pfam" id="PF00400">
    <property type="entry name" value="WD40"/>
    <property type="match status" value="4"/>
</dbReference>
<dbReference type="PRINTS" id="PR00320">
    <property type="entry name" value="GPROTEINBRPT"/>
</dbReference>
<dbReference type="SMART" id="SM00320">
    <property type="entry name" value="WD40"/>
    <property type="match status" value="6"/>
</dbReference>
<dbReference type="SUPFAM" id="SSF50978">
    <property type="entry name" value="WD40 repeat-like"/>
    <property type="match status" value="1"/>
</dbReference>
<dbReference type="PROSITE" id="PS00678">
    <property type="entry name" value="WD_REPEATS_1"/>
    <property type="match status" value="4"/>
</dbReference>
<dbReference type="PROSITE" id="PS50082">
    <property type="entry name" value="WD_REPEATS_2"/>
    <property type="match status" value="6"/>
</dbReference>
<dbReference type="PROSITE" id="PS50294">
    <property type="entry name" value="WD_REPEATS_REGION"/>
    <property type="match status" value="1"/>
</dbReference>
<gene>
    <name type="primary">MDV1</name>
    <name type="synonym">FIS2</name>
    <name type="synonym">GAG3</name>
    <name type="synonym">NET2</name>
    <name type="ordered locus">YJL112W</name>
    <name type="ORF">J0802</name>
</gene>
<accession>P47025</accession>
<accession>D6VW72</accession>
<sequence length="714" mass="80032">MSVNDQITHIGKTLSTTASAFLNYQKSNSNTQDVLTNNGPYKNLLSNTVNNASSTSYFYKRTEHGRFVKNASNTFEDIYSKTRRGDVFRNKFTDNKTCFRMLTYISDDLLNEIPTKEGLKSDADGKLLTEGGENENLRKNASKKETSLFQGFKSYLPIAELAIENTERLNYDTNGTSGTVGAKDVMSKTNERDEIHTELPNFQDSFLIPPGVETKKISSSYSPSALKSFSQTLVNSLEFLNIQKNSTLSEIRDIEVEVENLRQKKEKLLGKIANIEQNQLLLEDNLKQIDDRLDFLEEYGLEVIEANSDENAEDDGMSERKALKNDAIRNEGVTTESISSEASNLPPRRRQQLRDDNSLNRLGAFYSKSKKRHRKSFPTFQQLYEPGTKIGSIMSTHDDFLTCLDFDAPFGTLCTAGYLDHTVKIWDLSKQNKIGELAGHLATINCMQINRDYGTLVTGGRDAALKLWNLNLAQQLYQETQNLTSPTNHIDSPCVHTFEAHTDEVTALSLDPSFLVSGSQDRTIRQWDLRSGKCLQTIDLSFANVLTTSTNVDLSKSTLLTQRNERPSIGALQSFDAALATGTKDGVVRLWDLRSGKVIRTLKGHTDAITSLKFDSACLVTGSYDRTVRIWDLRTGLLNKFHAYSAPVLSLDLFQENAAVVVADEPSVQIYDSEKDESWSCVEQGNETSVSTVKYKENYMVEGRENGDVNIWAV</sequence>
<feature type="chain" id="PRO_0000051477" description="Mitochondrial division protein 1">
    <location>
        <begin position="1"/>
        <end position="714"/>
    </location>
</feature>
<feature type="repeat" description="WD 1">
    <location>
        <begin position="396"/>
        <end position="436"/>
    </location>
</feature>
<feature type="repeat" description="WD 2">
    <location>
        <begin position="439"/>
        <end position="478"/>
    </location>
</feature>
<feature type="repeat" description="WD 3">
    <location>
        <begin position="500"/>
        <end position="539"/>
    </location>
</feature>
<feature type="repeat" description="WD 4">
    <location>
        <begin position="561"/>
        <end position="603"/>
    </location>
</feature>
<feature type="repeat" description="WD 5">
    <location>
        <begin position="604"/>
        <end position="642"/>
    </location>
</feature>
<feature type="repeat" description="WD 6">
    <location>
        <begin position="644"/>
        <end position="681"/>
    </location>
</feature>
<feature type="repeat" description="WD 7">
    <location>
        <begin position="685"/>
        <end position="714"/>
    </location>
</feature>
<feature type="region of interest" description="Disordered" evidence="2">
    <location>
        <begin position="323"/>
        <end position="354"/>
    </location>
</feature>
<feature type="coiled-coil region" evidence="1">
    <location>
        <begin position="240"/>
        <end position="298"/>
    </location>
</feature>
<feature type="compositionally biased region" description="Polar residues" evidence="2">
    <location>
        <begin position="332"/>
        <end position="343"/>
    </location>
</feature>
<feature type="modified residue" description="Phosphoserine" evidence="19 20">
    <location>
        <position position="376"/>
    </location>
</feature>
<feature type="mutagenesis site" description="Abolishes interaction with FIS1." evidence="13">
    <original>L</original>
    <variation>P</variation>
    <location>
        <position position="148"/>
    </location>
</feature>
<feature type="mutagenesis site" description="Suppresses the mitochondrial fission defect of a FIS1-3 mutant by affecting interaction with FIS1." evidence="12">
    <original>E</original>
    <variation>G</variation>
    <location>
        <position position="250"/>
    </location>
</feature>
<feature type="mutagenesis site" description="No interaction with FIS1; slight decrease in interaction with DNM1." evidence="7">
    <original>F</original>
    <variation>A</variation>
    <location>
        <position position="400"/>
    </location>
</feature>
<feature type="mutagenesis site" description="Abolishes interaction with DNM1." evidence="13">
    <original>H</original>
    <variation>E</variation>
    <variation>N</variation>
    <location>
        <position position="440"/>
    </location>
</feature>
<feature type="mutagenesis site" description="Slight decrease in interaction with FIS1; 20-fold decrease in interaction with DNM1; even distribution along mitochondria not punctate." evidence="7">
    <original>R</original>
    <variation>A</variation>
    <location>
        <position position="461"/>
    </location>
</feature>
<feature type="mutagenesis site" description="Results in mitochondrial division defect, but has no effect on the interaction with DNM1." evidence="13">
    <original>N</original>
    <variation>R</variation>
    <location>
        <position position="544"/>
    </location>
</feature>
<feature type="mutagenesis site" description="Abolishes interaction with DNM1." evidence="13">
    <original>H</original>
    <variation>E</variation>
    <location>
        <position position="605"/>
    </location>
</feature>
<feature type="mutagenesis site" description="Slight decrease in interaction with DNM1." evidence="7">
    <original>D</original>
    <variation>A</variation>
    <location>
        <position position="664"/>
    </location>
</feature>
<feature type="mutagenesis site" description="Slight decrease in interaction with DNM1." evidence="7">
    <original>S</original>
    <variation>A</variation>
    <location>
        <position position="689"/>
    </location>
</feature>
<feature type="helix" evidence="21">
    <location>
        <begin position="148"/>
        <end position="161"/>
    </location>
</feature>
<feature type="helix" evidence="22">
    <location>
        <begin position="231"/>
        <end position="289"/>
    </location>
</feature>
<protein>
    <recommendedName>
        <fullName>Mitochondrial division protein 1</fullName>
    </recommendedName>
    <alternativeName>
        <fullName>Mitochondria fission 2 protein</fullName>
    </alternativeName>
</protein>